<gene>
    <name evidence="1" type="primary">ispE</name>
    <name type="ordered locus">SFV_1222</name>
</gene>
<keyword id="KW-0067">ATP-binding</keyword>
<keyword id="KW-0414">Isoprene biosynthesis</keyword>
<keyword id="KW-0418">Kinase</keyword>
<keyword id="KW-0547">Nucleotide-binding</keyword>
<keyword id="KW-0808">Transferase</keyword>
<feature type="chain" id="PRO_1000007895" description="4-diphosphocytidyl-2-C-methyl-D-erythritol kinase">
    <location>
        <begin position="1"/>
        <end position="283"/>
    </location>
</feature>
<feature type="active site" evidence="1">
    <location>
        <position position="10"/>
    </location>
</feature>
<feature type="active site" evidence="1">
    <location>
        <position position="141"/>
    </location>
</feature>
<feature type="binding site" evidence="1">
    <location>
        <begin position="99"/>
        <end position="109"/>
    </location>
    <ligand>
        <name>ATP</name>
        <dbReference type="ChEBI" id="CHEBI:30616"/>
    </ligand>
</feature>
<name>ISPE_SHIF8</name>
<comment type="function">
    <text evidence="1">Catalyzes the phosphorylation of the position 2 hydroxy group of 4-diphosphocytidyl-2C-methyl-D-erythritol.</text>
</comment>
<comment type="catalytic activity">
    <reaction evidence="1">
        <text>4-CDP-2-C-methyl-D-erythritol + ATP = 4-CDP-2-C-methyl-D-erythritol 2-phosphate + ADP + H(+)</text>
        <dbReference type="Rhea" id="RHEA:18437"/>
        <dbReference type="ChEBI" id="CHEBI:15378"/>
        <dbReference type="ChEBI" id="CHEBI:30616"/>
        <dbReference type="ChEBI" id="CHEBI:57823"/>
        <dbReference type="ChEBI" id="CHEBI:57919"/>
        <dbReference type="ChEBI" id="CHEBI:456216"/>
        <dbReference type="EC" id="2.7.1.148"/>
    </reaction>
</comment>
<comment type="pathway">
    <text evidence="1">Isoprenoid biosynthesis; isopentenyl diphosphate biosynthesis via DXP pathway; isopentenyl diphosphate from 1-deoxy-D-xylulose 5-phosphate: step 3/6.</text>
</comment>
<comment type="subunit">
    <text evidence="1">Homodimer.</text>
</comment>
<comment type="similarity">
    <text evidence="1">Belongs to the GHMP kinase family. IspE subfamily.</text>
</comment>
<reference key="1">
    <citation type="journal article" date="2006" name="BMC Genomics">
        <title>Complete genome sequence of Shigella flexneri 5b and comparison with Shigella flexneri 2a.</title>
        <authorList>
            <person name="Nie H."/>
            <person name="Yang F."/>
            <person name="Zhang X."/>
            <person name="Yang J."/>
            <person name="Chen L."/>
            <person name="Wang J."/>
            <person name="Xiong Z."/>
            <person name="Peng J."/>
            <person name="Sun L."/>
            <person name="Dong J."/>
            <person name="Xue Y."/>
            <person name="Xu X."/>
            <person name="Chen S."/>
            <person name="Yao Z."/>
            <person name="Shen Y."/>
            <person name="Jin Q."/>
        </authorList>
    </citation>
    <scope>NUCLEOTIDE SEQUENCE [LARGE SCALE GENOMIC DNA]</scope>
    <source>
        <strain>8401</strain>
    </source>
</reference>
<proteinExistence type="inferred from homology"/>
<evidence type="ECO:0000255" key="1">
    <source>
        <dbReference type="HAMAP-Rule" id="MF_00061"/>
    </source>
</evidence>
<accession>Q0T5I7</accession>
<sequence length="283" mass="30953">MRTQWPSPAKLNLFLYITGQRADGYHTLQTLFQFLDYGDTISIELRDDGDIRLLTPVEGVEHEDNLIVRAARLLMKTAADSGRLPTGSGANISIDKRLPMGGGLGGGSSNAATVLVALNHLWQCGLSMDELAEMGLTLGADVPVFVRGHAAFAEGVGEILTPVDPPEKWYLVAHPGVSIPTPVIFKDPELPRNTPKRSIETLLKCEFSNDCEVIARKRFREVDAVLSWLLEYAPSRLTGTGACVFAEFDTESEARQVLEQAPEWLNGFVAKGVNLSPLHRAML</sequence>
<dbReference type="EC" id="2.7.1.148" evidence="1"/>
<dbReference type="EMBL" id="CP000266">
    <property type="protein sequence ID" value="ABF03428.1"/>
    <property type="molecule type" value="Genomic_DNA"/>
</dbReference>
<dbReference type="RefSeq" id="WP_001260333.1">
    <property type="nucleotide sequence ID" value="NC_008258.1"/>
</dbReference>
<dbReference type="SMR" id="Q0T5I7"/>
<dbReference type="GeneID" id="93775273"/>
<dbReference type="KEGG" id="sfv:SFV_1222"/>
<dbReference type="HOGENOM" id="CLU_053057_3_0_6"/>
<dbReference type="UniPathway" id="UPA00056">
    <property type="reaction ID" value="UER00094"/>
</dbReference>
<dbReference type="Proteomes" id="UP000000659">
    <property type="component" value="Chromosome"/>
</dbReference>
<dbReference type="GO" id="GO:0050515">
    <property type="term" value="F:4-(cytidine 5'-diphospho)-2-C-methyl-D-erythritol kinase activity"/>
    <property type="evidence" value="ECO:0007669"/>
    <property type="project" value="UniProtKB-UniRule"/>
</dbReference>
<dbReference type="GO" id="GO:0005524">
    <property type="term" value="F:ATP binding"/>
    <property type="evidence" value="ECO:0007669"/>
    <property type="project" value="UniProtKB-UniRule"/>
</dbReference>
<dbReference type="GO" id="GO:0019288">
    <property type="term" value="P:isopentenyl diphosphate biosynthetic process, methylerythritol 4-phosphate pathway"/>
    <property type="evidence" value="ECO:0007669"/>
    <property type="project" value="UniProtKB-UniRule"/>
</dbReference>
<dbReference type="GO" id="GO:0016114">
    <property type="term" value="P:terpenoid biosynthetic process"/>
    <property type="evidence" value="ECO:0007669"/>
    <property type="project" value="InterPro"/>
</dbReference>
<dbReference type="FunFam" id="3.30.230.10:FF:000022">
    <property type="entry name" value="4-diphosphocytidyl-2-C-methyl-D-erythritol kinase"/>
    <property type="match status" value="1"/>
</dbReference>
<dbReference type="FunFam" id="3.30.70.890:FF:000004">
    <property type="entry name" value="4-diphosphocytidyl-2-C-methyl-D-erythritol kinase"/>
    <property type="match status" value="1"/>
</dbReference>
<dbReference type="Gene3D" id="3.30.230.10">
    <property type="match status" value="1"/>
</dbReference>
<dbReference type="Gene3D" id="3.30.70.890">
    <property type="entry name" value="GHMP kinase, C-terminal domain"/>
    <property type="match status" value="1"/>
</dbReference>
<dbReference type="HAMAP" id="MF_00061">
    <property type="entry name" value="IspE"/>
    <property type="match status" value="1"/>
</dbReference>
<dbReference type="InterPro" id="IPR013750">
    <property type="entry name" value="GHMP_kinase_C_dom"/>
</dbReference>
<dbReference type="InterPro" id="IPR036554">
    <property type="entry name" value="GHMP_kinase_C_sf"/>
</dbReference>
<dbReference type="InterPro" id="IPR006204">
    <property type="entry name" value="GHMP_kinase_N_dom"/>
</dbReference>
<dbReference type="InterPro" id="IPR004424">
    <property type="entry name" value="IspE"/>
</dbReference>
<dbReference type="InterPro" id="IPR020568">
    <property type="entry name" value="Ribosomal_Su5_D2-typ_SF"/>
</dbReference>
<dbReference type="InterPro" id="IPR014721">
    <property type="entry name" value="Ribsml_uS5_D2-typ_fold_subgr"/>
</dbReference>
<dbReference type="NCBIfam" id="TIGR00154">
    <property type="entry name" value="ispE"/>
    <property type="match status" value="1"/>
</dbReference>
<dbReference type="PANTHER" id="PTHR43527">
    <property type="entry name" value="4-DIPHOSPHOCYTIDYL-2-C-METHYL-D-ERYTHRITOL KINASE, CHLOROPLASTIC"/>
    <property type="match status" value="1"/>
</dbReference>
<dbReference type="PANTHER" id="PTHR43527:SF2">
    <property type="entry name" value="4-DIPHOSPHOCYTIDYL-2-C-METHYL-D-ERYTHRITOL KINASE, CHLOROPLASTIC"/>
    <property type="match status" value="1"/>
</dbReference>
<dbReference type="Pfam" id="PF08544">
    <property type="entry name" value="GHMP_kinases_C"/>
    <property type="match status" value="1"/>
</dbReference>
<dbReference type="Pfam" id="PF00288">
    <property type="entry name" value="GHMP_kinases_N"/>
    <property type="match status" value="1"/>
</dbReference>
<dbReference type="PIRSF" id="PIRSF010376">
    <property type="entry name" value="IspE"/>
    <property type="match status" value="1"/>
</dbReference>
<dbReference type="SUPFAM" id="SSF55060">
    <property type="entry name" value="GHMP Kinase, C-terminal domain"/>
    <property type="match status" value="1"/>
</dbReference>
<dbReference type="SUPFAM" id="SSF54211">
    <property type="entry name" value="Ribosomal protein S5 domain 2-like"/>
    <property type="match status" value="1"/>
</dbReference>
<organism>
    <name type="scientific">Shigella flexneri serotype 5b (strain 8401)</name>
    <dbReference type="NCBI Taxonomy" id="373384"/>
    <lineage>
        <taxon>Bacteria</taxon>
        <taxon>Pseudomonadati</taxon>
        <taxon>Pseudomonadota</taxon>
        <taxon>Gammaproteobacteria</taxon>
        <taxon>Enterobacterales</taxon>
        <taxon>Enterobacteriaceae</taxon>
        <taxon>Shigella</taxon>
    </lineage>
</organism>
<protein>
    <recommendedName>
        <fullName evidence="1">4-diphosphocytidyl-2-C-methyl-D-erythritol kinase</fullName>
        <shortName evidence="1">CMK</shortName>
        <ecNumber evidence="1">2.7.1.148</ecNumber>
    </recommendedName>
    <alternativeName>
        <fullName evidence="1">4-(cytidine-5'-diphospho)-2-C-methyl-D-erythritol kinase</fullName>
    </alternativeName>
</protein>